<feature type="chain" id="PRO_0000193333" description="Demethylmenaquinone methyltransferase">
    <location>
        <begin position="1"/>
        <end position="241"/>
    </location>
</feature>
<feature type="binding site" evidence="1">
    <location>
        <position position="60"/>
    </location>
    <ligand>
        <name>S-adenosyl-L-methionine</name>
        <dbReference type="ChEBI" id="CHEBI:59789"/>
    </ligand>
</feature>
<feature type="binding site" evidence="1">
    <location>
        <position position="81"/>
    </location>
    <ligand>
        <name>S-adenosyl-L-methionine</name>
        <dbReference type="ChEBI" id="CHEBI:59789"/>
    </ligand>
</feature>
<feature type="binding site" evidence="1">
    <location>
        <begin position="106"/>
        <end position="107"/>
    </location>
    <ligand>
        <name>S-adenosyl-L-methionine</name>
        <dbReference type="ChEBI" id="CHEBI:59789"/>
    </ligand>
</feature>
<comment type="function">
    <text evidence="1">Methyltransferase required for the conversion of demethylmenaquinol (DMKH2) to menaquinol (MKH2).</text>
</comment>
<comment type="catalytic activity">
    <reaction evidence="1">
        <text>a 2-demethylmenaquinol + S-adenosyl-L-methionine = a menaquinol + S-adenosyl-L-homocysteine + H(+)</text>
        <dbReference type="Rhea" id="RHEA:42640"/>
        <dbReference type="Rhea" id="RHEA-COMP:9539"/>
        <dbReference type="Rhea" id="RHEA-COMP:9563"/>
        <dbReference type="ChEBI" id="CHEBI:15378"/>
        <dbReference type="ChEBI" id="CHEBI:18151"/>
        <dbReference type="ChEBI" id="CHEBI:55437"/>
        <dbReference type="ChEBI" id="CHEBI:57856"/>
        <dbReference type="ChEBI" id="CHEBI:59789"/>
        <dbReference type="EC" id="2.1.1.163"/>
    </reaction>
</comment>
<comment type="pathway">
    <text evidence="1">Quinol/quinone metabolism; menaquinone biosynthesis; menaquinol from 1,4-dihydroxy-2-naphthoate: step 2/2.</text>
</comment>
<comment type="similarity">
    <text evidence="1">Belongs to the class I-like SAM-binding methyltransferase superfamily. MenG/UbiE family.</text>
</comment>
<keyword id="KW-0474">Menaquinone biosynthesis</keyword>
<keyword id="KW-0489">Methyltransferase</keyword>
<keyword id="KW-0949">S-adenosyl-L-methionine</keyword>
<keyword id="KW-0808">Transferase</keyword>
<gene>
    <name evidence="1" type="primary">menG</name>
    <name type="ordered locus">SE_1158</name>
</gene>
<proteinExistence type="inferred from homology"/>
<name>MENG_STAES</name>
<sequence length="241" mass="27194">MAENQAKKEQVHTVFQNISQKYDRLNNIISFEQHKVWRKHVMSTMNVQKGSKALDVCCGTADWTIALSEAVGSKGQVTGLDFSENMLEVGKQKTASLENIQLVHGDAMNLPFDDNSFDYVTIGFGLRNVPDYLSALKEMHRVLKPGGMVVCLETSQPTLPLFKQIYSLYFKFVMPIFGKMFAKSKEEYEWLQQSTFNFPDKQTLKGLFFEAGFNDIIVRSFTGGVAAMHLGYKENSSSKGD</sequence>
<dbReference type="EC" id="2.1.1.163" evidence="1"/>
<dbReference type="EMBL" id="AE015929">
    <property type="protein sequence ID" value="AAO04755.1"/>
    <property type="molecule type" value="Genomic_DNA"/>
</dbReference>
<dbReference type="RefSeq" id="NP_764713.1">
    <property type="nucleotide sequence ID" value="NC_004461.1"/>
</dbReference>
<dbReference type="RefSeq" id="WP_001831089.1">
    <property type="nucleotide sequence ID" value="NZ_WBME01000006.1"/>
</dbReference>
<dbReference type="SMR" id="Q8CSH9"/>
<dbReference type="KEGG" id="sep:SE_1158"/>
<dbReference type="PATRIC" id="fig|176280.10.peg.1130"/>
<dbReference type="eggNOG" id="COG2226">
    <property type="taxonomic scope" value="Bacteria"/>
</dbReference>
<dbReference type="HOGENOM" id="CLU_037990_0_0_9"/>
<dbReference type="OrthoDB" id="9808140at2"/>
<dbReference type="UniPathway" id="UPA00079">
    <property type="reaction ID" value="UER00169"/>
</dbReference>
<dbReference type="Proteomes" id="UP000001411">
    <property type="component" value="Chromosome"/>
</dbReference>
<dbReference type="GO" id="GO:0043770">
    <property type="term" value="F:demethylmenaquinone methyltransferase activity"/>
    <property type="evidence" value="ECO:0007669"/>
    <property type="project" value="UniProtKB-UniRule"/>
</dbReference>
<dbReference type="GO" id="GO:0009234">
    <property type="term" value="P:menaquinone biosynthetic process"/>
    <property type="evidence" value="ECO:0007669"/>
    <property type="project" value="UniProtKB-UniRule"/>
</dbReference>
<dbReference type="GO" id="GO:0032259">
    <property type="term" value="P:methylation"/>
    <property type="evidence" value="ECO:0007669"/>
    <property type="project" value="UniProtKB-KW"/>
</dbReference>
<dbReference type="CDD" id="cd02440">
    <property type="entry name" value="AdoMet_MTases"/>
    <property type="match status" value="1"/>
</dbReference>
<dbReference type="FunFam" id="3.40.50.150:FF:000086">
    <property type="entry name" value="Demethylmenaquinone methyltransferase"/>
    <property type="match status" value="1"/>
</dbReference>
<dbReference type="Gene3D" id="3.40.50.150">
    <property type="entry name" value="Vaccinia Virus protein VP39"/>
    <property type="match status" value="1"/>
</dbReference>
<dbReference type="HAMAP" id="MF_01813">
    <property type="entry name" value="MenG_UbiE_methyltr"/>
    <property type="match status" value="1"/>
</dbReference>
<dbReference type="InterPro" id="IPR029063">
    <property type="entry name" value="SAM-dependent_MTases_sf"/>
</dbReference>
<dbReference type="InterPro" id="IPR004033">
    <property type="entry name" value="UbiE/COQ5_MeTrFase"/>
</dbReference>
<dbReference type="InterPro" id="IPR023576">
    <property type="entry name" value="UbiE/COQ5_MeTrFase_CS"/>
</dbReference>
<dbReference type="NCBIfam" id="TIGR01934">
    <property type="entry name" value="MenG_MenH_UbiE"/>
    <property type="match status" value="1"/>
</dbReference>
<dbReference type="NCBIfam" id="NF001243">
    <property type="entry name" value="PRK00216.1-4"/>
    <property type="match status" value="1"/>
</dbReference>
<dbReference type="NCBIfam" id="NF001244">
    <property type="entry name" value="PRK00216.1-5"/>
    <property type="match status" value="1"/>
</dbReference>
<dbReference type="PANTHER" id="PTHR43591:SF24">
    <property type="entry name" value="2-METHOXY-6-POLYPRENYL-1,4-BENZOQUINOL METHYLASE, MITOCHONDRIAL"/>
    <property type="match status" value="1"/>
</dbReference>
<dbReference type="PANTHER" id="PTHR43591">
    <property type="entry name" value="METHYLTRANSFERASE"/>
    <property type="match status" value="1"/>
</dbReference>
<dbReference type="Pfam" id="PF01209">
    <property type="entry name" value="Ubie_methyltran"/>
    <property type="match status" value="1"/>
</dbReference>
<dbReference type="SUPFAM" id="SSF53335">
    <property type="entry name" value="S-adenosyl-L-methionine-dependent methyltransferases"/>
    <property type="match status" value="1"/>
</dbReference>
<dbReference type="PROSITE" id="PS51608">
    <property type="entry name" value="SAM_MT_UBIE"/>
    <property type="match status" value="1"/>
</dbReference>
<dbReference type="PROSITE" id="PS01183">
    <property type="entry name" value="UBIE_1"/>
    <property type="match status" value="1"/>
</dbReference>
<dbReference type="PROSITE" id="PS01184">
    <property type="entry name" value="UBIE_2"/>
    <property type="match status" value="1"/>
</dbReference>
<protein>
    <recommendedName>
        <fullName evidence="1">Demethylmenaquinone methyltransferase</fullName>
        <ecNumber evidence="1">2.1.1.163</ecNumber>
    </recommendedName>
</protein>
<evidence type="ECO:0000255" key="1">
    <source>
        <dbReference type="HAMAP-Rule" id="MF_01813"/>
    </source>
</evidence>
<accession>Q8CSH9</accession>
<organism>
    <name type="scientific">Staphylococcus epidermidis (strain ATCC 12228 / FDA PCI 1200)</name>
    <dbReference type="NCBI Taxonomy" id="176280"/>
    <lineage>
        <taxon>Bacteria</taxon>
        <taxon>Bacillati</taxon>
        <taxon>Bacillota</taxon>
        <taxon>Bacilli</taxon>
        <taxon>Bacillales</taxon>
        <taxon>Staphylococcaceae</taxon>
        <taxon>Staphylococcus</taxon>
    </lineage>
</organism>
<reference key="1">
    <citation type="journal article" date="2003" name="Mol. Microbiol.">
        <title>Genome-based analysis of virulence genes in a non-biofilm-forming Staphylococcus epidermidis strain (ATCC 12228).</title>
        <authorList>
            <person name="Zhang Y.-Q."/>
            <person name="Ren S.-X."/>
            <person name="Li H.-L."/>
            <person name="Wang Y.-X."/>
            <person name="Fu G."/>
            <person name="Yang J."/>
            <person name="Qin Z.-Q."/>
            <person name="Miao Y.-G."/>
            <person name="Wang W.-Y."/>
            <person name="Chen R.-S."/>
            <person name="Shen Y."/>
            <person name="Chen Z."/>
            <person name="Yuan Z.-H."/>
            <person name="Zhao G.-P."/>
            <person name="Qu D."/>
            <person name="Danchin A."/>
            <person name="Wen Y.-M."/>
        </authorList>
    </citation>
    <scope>NUCLEOTIDE SEQUENCE [LARGE SCALE GENOMIC DNA]</scope>
    <source>
        <strain>ATCC 12228 / FDA PCI 1200</strain>
    </source>
</reference>